<protein>
    <recommendedName>
        <fullName evidence="1">Glutamate-1-semialdehyde 2,1-aminomutase</fullName>
        <shortName evidence="1">GSA</shortName>
        <ecNumber evidence="1">5.4.3.8</ecNumber>
    </recommendedName>
    <alternativeName>
        <fullName evidence="1">Glutamate-1-semialdehyde aminotransferase</fullName>
        <shortName evidence="1">GSA-AT</shortName>
    </alternativeName>
</protein>
<keyword id="KW-0963">Cytoplasm</keyword>
<keyword id="KW-0413">Isomerase</keyword>
<keyword id="KW-0627">Porphyrin biosynthesis</keyword>
<keyword id="KW-0663">Pyridoxal phosphate</keyword>
<organism>
    <name type="scientific">Aeromonas salmonicida (strain A449)</name>
    <dbReference type="NCBI Taxonomy" id="382245"/>
    <lineage>
        <taxon>Bacteria</taxon>
        <taxon>Pseudomonadati</taxon>
        <taxon>Pseudomonadota</taxon>
        <taxon>Gammaproteobacteria</taxon>
        <taxon>Aeromonadales</taxon>
        <taxon>Aeromonadaceae</taxon>
        <taxon>Aeromonas</taxon>
    </lineage>
</organism>
<proteinExistence type="inferred from homology"/>
<evidence type="ECO:0000255" key="1">
    <source>
        <dbReference type="HAMAP-Rule" id="MF_00375"/>
    </source>
</evidence>
<name>GSA_AERS4</name>
<accession>A4SJ79</accession>
<sequence length="428" mass="45936">MSKSDQLFEQARQTIPGGVNSPVRAFNGVGGTPRFIDHADGAYLYDVDGQAYVDYIGSWGPMLLGHNHPAIKAAVIKAVEKGLSYGAPTEIEVLMAEKVRQIVPSMEQVRMVNSGTEATMSAIRLARGYTGRDKIVKFEGCYHGHADSLLVKAGSGALTLGQPNSPGVPADFAKHTLTCVFNDLDSVREAFTQYGCDIACIIVEPVAGNMNCIPPVPGFLEGLRTICDEFGALLILDEVMTGFRVSLRGAQGYYNIDPDLTTLGKIIGAGMPVGAFGGKKKVMQHIAPTGPVYQAGTLSGNPVAMAAGLTMLDLLLEPGLYEQLNAKTARVAEGLKAAAAKHGIPLAINYVGGMFGFFFTDEPEITRYEQVTRCDMERFKRFYHLMLEEGVYLAPSAYEAGFLSLAHGDKEIEHTLAAAERSFAKLAG</sequence>
<reference key="1">
    <citation type="journal article" date="2008" name="BMC Genomics">
        <title>The genome of Aeromonas salmonicida subsp. salmonicida A449: insights into the evolution of a fish pathogen.</title>
        <authorList>
            <person name="Reith M.E."/>
            <person name="Singh R.K."/>
            <person name="Curtis B."/>
            <person name="Boyd J.M."/>
            <person name="Bouevitch A."/>
            <person name="Kimball J."/>
            <person name="Munholland J."/>
            <person name="Murphy C."/>
            <person name="Sarty D."/>
            <person name="Williams J."/>
            <person name="Nash J.H."/>
            <person name="Johnson S.C."/>
            <person name="Brown L.L."/>
        </authorList>
    </citation>
    <scope>NUCLEOTIDE SEQUENCE [LARGE SCALE GENOMIC DNA]</scope>
    <source>
        <strain>A449</strain>
    </source>
</reference>
<comment type="catalytic activity">
    <reaction evidence="1">
        <text>(S)-4-amino-5-oxopentanoate = 5-aminolevulinate</text>
        <dbReference type="Rhea" id="RHEA:14265"/>
        <dbReference type="ChEBI" id="CHEBI:57501"/>
        <dbReference type="ChEBI" id="CHEBI:356416"/>
        <dbReference type="EC" id="5.4.3.8"/>
    </reaction>
</comment>
<comment type="cofactor">
    <cofactor evidence="1">
        <name>pyridoxal 5'-phosphate</name>
        <dbReference type="ChEBI" id="CHEBI:597326"/>
    </cofactor>
</comment>
<comment type="pathway">
    <text evidence="1">Porphyrin-containing compound metabolism; protoporphyrin-IX biosynthesis; 5-aminolevulinate from L-glutamyl-tRNA(Glu): step 2/2.</text>
</comment>
<comment type="subunit">
    <text evidence="1">Homodimer.</text>
</comment>
<comment type="subcellular location">
    <subcellularLocation>
        <location evidence="1">Cytoplasm</location>
    </subcellularLocation>
</comment>
<comment type="similarity">
    <text evidence="1">Belongs to the class-III pyridoxal-phosphate-dependent aminotransferase family. HemL subfamily.</text>
</comment>
<dbReference type="EC" id="5.4.3.8" evidence="1"/>
<dbReference type="EMBL" id="CP000644">
    <property type="protein sequence ID" value="ABO88951.1"/>
    <property type="molecule type" value="Genomic_DNA"/>
</dbReference>
<dbReference type="RefSeq" id="WP_005313142.1">
    <property type="nucleotide sequence ID" value="NC_009348.1"/>
</dbReference>
<dbReference type="SMR" id="A4SJ79"/>
<dbReference type="STRING" id="29491.GCA_000820065_01690"/>
<dbReference type="GeneID" id="79878347"/>
<dbReference type="KEGG" id="asa:ASA_0797"/>
<dbReference type="eggNOG" id="COG0001">
    <property type="taxonomic scope" value="Bacteria"/>
</dbReference>
<dbReference type="HOGENOM" id="CLU_016922_1_5_6"/>
<dbReference type="UniPathway" id="UPA00251">
    <property type="reaction ID" value="UER00317"/>
</dbReference>
<dbReference type="Proteomes" id="UP000000225">
    <property type="component" value="Chromosome"/>
</dbReference>
<dbReference type="GO" id="GO:0005737">
    <property type="term" value="C:cytoplasm"/>
    <property type="evidence" value="ECO:0007669"/>
    <property type="project" value="UniProtKB-SubCell"/>
</dbReference>
<dbReference type="GO" id="GO:0042286">
    <property type="term" value="F:glutamate-1-semialdehyde 2,1-aminomutase activity"/>
    <property type="evidence" value="ECO:0007669"/>
    <property type="project" value="UniProtKB-UniRule"/>
</dbReference>
<dbReference type="GO" id="GO:0030170">
    <property type="term" value="F:pyridoxal phosphate binding"/>
    <property type="evidence" value="ECO:0007669"/>
    <property type="project" value="InterPro"/>
</dbReference>
<dbReference type="GO" id="GO:0008483">
    <property type="term" value="F:transaminase activity"/>
    <property type="evidence" value="ECO:0007669"/>
    <property type="project" value="InterPro"/>
</dbReference>
<dbReference type="GO" id="GO:0006782">
    <property type="term" value="P:protoporphyrinogen IX biosynthetic process"/>
    <property type="evidence" value="ECO:0007669"/>
    <property type="project" value="UniProtKB-UniRule"/>
</dbReference>
<dbReference type="CDD" id="cd00610">
    <property type="entry name" value="OAT_like"/>
    <property type="match status" value="1"/>
</dbReference>
<dbReference type="FunFam" id="3.40.640.10:FF:000021">
    <property type="entry name" value="Glutamate-1-semialdehyde 2,1-aminomutase"/>
    <property type="match status" value="1"/>
</dbReference>
<dbReference type="FunFam" id="3.90.1150.10:FF:000012">
    <property type="entry name" value="Glutamate-1-semialdehyde 2,1-aminomutase"/>
    <property type="match status" value="1"/>
</dbReference>
<dbReference type="Gene3D" id="3.90.1150.10">
    <property type="entry name" value="Aspartate Aminotransferase, domain 1"/>
    <property type="match status" value="1"/>
</dbReference>
<dbReference type="Gene3D" id="3.40.640.10">
    <property type="entry name" value="Type I PLP-dependent aspartate aminotransferase-like (Major domain)"/>
    <property type="match status" value="1"/>
</dbReference>
<dbReference type="HAMAP" id="MF_00375">
    <property type="entry name" value="HemL_aminotrans_3"/>
    <property type="match status" value="1"/>
</dbReference>
<dbReference type="InterPro" id="IPR004639">
    <property type="entry name" value="4pyrrol_synth_GluAld_NH2Trfase"/>
</dbReference>
<dbReference type="InterPro" id="IPR005814">
    <property type="entry name" value="Aminotrans_3"/>
</dbReference>
<dbReference type="InterPro" id="IPR049704">
    <property type="entry name" value="Aminotrans_3_PPA_site"/>
</dbReference>
<dbReference type="InterPro" id="IPR015424">
    <property type="entry name" value="PyrdxlP-dep_Trfase"/>
</dbReference>
<dbReference type="InterPro" id="IPR015421">
    <property type="entry name" value="PyrdxlP-dep_Trfase_major"/>
</dbReference>
<dbReference type="InterPro" id="IPR015422">
    <property type="entry name" value="PyrdxlP-dep_Trfase_small"/>
</dbReference>
<dbReference type="NCBIfam" id="TIGR00713">
    <property type="entry name" value="hemL"/>
    <property type="match status" value="1"/>
</dbReference>
<dbReference type="NCBIfam" id="NF000818">
    <property type="entry name" value="PRK00062.1"/>
    <property type="match status" value="1"/>
</dbReference>
<dbReference type="PANTHER" id="PTHR43713">
    <property type="entry name" value="GLUTAMATE-1-SEMIALDEHYDE 2,1-AMINOMUTASE"/>
    <property type="match status" value="1"/>
</dbReference>
<dbReference type="PANTHER" id="PTHR43713:SF3">
    <property type="entry name" value="GLUTAMATE-1-SEMIALDEHYDE 2,1-AMINOMUTASE 1, CHLOROPLASTIC-RELATED"/>
    <property type="match status" value="1"/>
</dbReference>
<dbReference type="Pfam" id="PF00202">
    <property type="entry name" value="Aminotran_3"/>
    <property type="match status" value="1"/>
</dbReference>
<dbReference type="SUPFAM" id="SSF53383">
    <property type="entry name" value="PLP-dependent transferases"/>
    <property type="match status" value="1"/>
</dbReference>
<dbReference type="PROSITE" id="PS00600">
    <property type="entry name" value="AA_TRANSFER_CLASS_3"/>
    <property type="match status" value="1"/>
</dbReference>
<gene>
    <name evidence="1" type="primary">hemL</name>
    <name type="ordered locus">ASA_0797</name>
</gene>
<feature type="chain" id="PRO_0000300891" description="Glutamate-1-semialdehyde 2,1-aminomutase">
    <location>
        <begin position="1"/>
        <end position="428"/>
    </location>
</feature>
<feature type="modified residue" description="N6-(pyridoxal phosphate)lysine" evidence="1">
    <location>
        <position position="265"/>
    </location>
</feature>